<protein>
    <recommendedName>
        <fullName evidence="1">Elongation factor Ts, mitochondrial</fullName>
        <shortName evidence="1">EF-Ts</shortName>
        <shortName evidence="1">EF-TsMt</shortName>
    </recommendedName>
</protein>
<gene>
    <name type="primary">tsfm</name>
    <name type="ORF">zgc:158429</name>
</gene>
<accession>A1A5Z3</accession>
<organism>
    <name type="scientific">Danio rerio</name>
    <name type="common">Zebrafish</name>
    <name type="synonym">Brachydanio rerio</name>
    <dbReference type="NCBI Taxonomy" id="7955"/>
    <lineage>
        <taxon>Eukaryota</taxon>
        <taxon>Metazoa</taxon>
        <taxon>Chordata</taxon>
        <taxon>Craniata</taxon>
        <taxon>Vertebrata</taxon>
        <taxon>Euteleostomi</taxon>
        <taxon>Actinopterygii</taxon>
        <taxon>Neopterygii</taxon>
        <taxon>Teleostei</taxon>
        <taxon>Ostariophysi</taxon>
        <taxon>Cypriniformes</taxon>
        <taxon>Danionidae</taxon>
        <taxon>Danioninae</taxon>
        <taxon>Danio</taxon>
    </lineage>
</organism>
<dbReference type="EMBL" id="BC128869">
    <property type="protein sequence ID" value="AAI28870.1"/>
    <property type="molecule type" value="mRNA"/>
</dbReference>
<dbReference type="RefSeq" id="NP_001073504.1">
    <property type="nucleotide sequence ID" value="NM_001080035.1"/>
</dbReference>
<dbReference type="SMR" id="A1A5Z3"/>
<dbReference type="FunCoup" id="A1A5Z3">
    <property type="interactions" value="2170"/>
</dbReference>
<dbReference type="STRING" id="7955.ENSDARP00000080380"/>
<dbReference type="PaxDb" id="7955-ENSDARP00000080380"/>
<dbReference type="PeptideAtlas" id="A1A5Z3"/>
<dbReference type="GeneID" id="567785"/>
<dbReference type="KEGG" id="dre:567785"/>
<dbReference type="AGR" id="ZFIN:ZDB-GENE-061215-17"/>
<dbReference type="CTD" id="10102"/>
<dbReference type="ZFIN" id="ZDB-GENE-061215-17">
    <property type="gene designation" value="tsfm"/>
</dbReference>
<dbReference type="eggNOG" id="KOG1071">
    <property type="taxonomic scope" value="Eukaryota"/>
</dbReference>
<dbReference type="InParanoid" id="A1A5Z3"/>
<dbReference type="OrthoDB" id="277235at2759"/>
<dbReference type="PRO" id="PR:A1A5Z3"/>
<dbReference type="Proteomes" id="UP000000437">
    <property type="component" value="Alternate scaffold 6"/>
</dbReference>
<dbReference type="Proteomes" id="UP000000437">
    <property type="component" value="Chromosome 6"/>
</dbReference>
<dbReference type="GO" id="GO:0005739">
    <property type="term" value="C:mitochondrion"/>
    <property type="evidence" value="ECO:0007669"/>
    <property type="project" value="UniProtKB-SubCell"/>
</dbReference>
<dbReference type="GO" id="GO:0003746">
    <property type="term" value="F:translation elongation factor activity"/>
    <property type="evidence" value="ECO:0000318"/>
    <property type="project" value="GO_Central"/>
</dbReference>
<dbReference type="GO" id="GO:0070125">
    <property type="term" value="P:mitochondrial translational elongation"/>
    <property type="evidence" value="ECO:0000318"/>
    <property type="project" value="GO_Central"/>
</dbReference>
<dbReference type="CDD" id="cd14275">
    <property type="entry name" value="UBA_EF-Ts"/>
    <property type="match status" value="1"/>
</dbReference>
<dbReference type="FunFam" id="1.10.8.10:FF:000031">
    <property type="entry name" value="Elongation factor Ts, mitochondrial"/>
    <property type="match status" value="1"/>
</dbReference>
<dbReference type="FunFam" id="3.30.479.20:FF:000008">
    <property type="entry name" value="Elongation factor Ts, mitochondrial"/>
    <property type="match status" value="1"/>
</dbReference>
<dbReference type="Gene3D" id="1.10.8.10">
    <property type="entry name" value="DNA helicase RuvA subunit, C-terminal domain"/>
    <property type="match status" value="1"/>
</dbReference>
<dbReference type="Gene3D" id="3.30.479.20">
    <property type="entry name" value="Elongation factor Ts, dimerisation domain"/>
    <property type="match status" value="2"/>
</dbReference>
<dbReference type="HAMAP" id="MF_00050">
    <property type="entry name" value="EF_Ts"/>
    <property type="match status" value="1"/>
</dbReference>
<dbReference type="InterPro" id="IPR036402">
    <property type="entry name" value="EF-Ts_dimer_sf"/>
</dbReference>
<dbReference type="InterPro" id="IPR001816">
    <property type="entry name" value="Transl_elong_EFTs/EF1B"/>
</dbReference>
<dbReference type="InterPro" id="IPR014039">
    <property type="entry name" value="Transl_elong_EFTs/EF1B_dimer"/>
</dbReference>
<dbReference type="InterPro" id="IPR018101">
    <property type="entry name" value="Transl_elong_Ts_CS"/>
</dbReference>
<dbReference type="InterPro" id="IPR009060">
    <property type="entry name" value="UBA-like_sf"/>
</dbReference>
<dbReference type="NCBIfam" id="TIGR00116">
    <property type="entry name" value="tsf"/>
    <property type="match status" value="1"/>
</dbReference>
<dbReference type="PANTHER" id="PTHR11741">
    <property type="entry name" value="ELONGATION FACTOR TS"/>
    <property type="match status" value="1"/>
</dbReference>
<dbReference type="PANTHER" id="PTHR11741:SF0">
    <property type="entry name" value="ELONGATION FACTOR TS, MITOCHONDRIAL"/>
    <property type="match status" value="1"/>
</dbReference>
<dbReference type="Pfam" id="PF25025">
    <property type="entry name" value="EF-Ts_N"/>
    <property type="match status" value="1"/>
</dbReference>
<dbReference type="Pfam" id="PF00889">
    <property type="entry name" value="EF_TS"/>
    <property type="match status" value="1"/>
</dbReference>
<dbReference type="SUPFAM" id="SSF54713">
    <property type="entry name" value="Elongation factor Ts (EF-Ts), dimerisation domain"/>
    <property type="match status" value="2"/>
</dbReference>
<dbReference type="SUPFAM" id="SSF46934">
    <property type="entry name" value="UBA-like"/>
    <property type="match status" value="1"/>
</dbReference>
<dbReference type="PROSITE" id="PS01127">
    <property type="entry name" value="EF_TS_2"/>
    <property type="match status" value="1"/>
</dbReference>
<comment type="function">
    <text evidence="1">Associates with the EF-Tu.GDP complex and induces the exchange of GDP to GTP. It remains bound to the aminoacyl-tRNA.EF-Tu.GTP complex up to the GTP hydrolysis stage on the ribosome.</text>
</comment>
<comment type="subcellular location">
    <subcellularLocation>
        <location evidence="1">Mitochondrion</location>
    </subcellularLocation>
</comment>
<comment type="miscellaneous">
    <text evidence="1">This protein may be expected to contain an N-terminal transit peptide but none has been predicted.</text>
</comment>
<comment type="similarity">
    <text evidence="1">Belongs to the EF-Ts family.</text>
</comment>
<feature type="chain" id="PRO_0000402312" description="Elongation factor Ts, mitochondrial">
    <location>
        <begin position="1"/>
        <end position="305"/>
    </location>
</feature>
<reference key="1">
    <citation type="submission" date="2006-12" db="EMBL/GenBank/DDBJ databases">
        <authorList>
            <consortium name="NIH - Zebrafish Gene Collection (ZGC) project"/>
        </authorList>
    </citation>
    <scope>NUCLEOTIDE SEQUENCE [LARGE SCALE MRNA]</scope>
    <source>
        <tissue>Kidney</tissue>
    </source>
</reference>
<keyword id="KW-0251">Elongation factor</keyword>
<keyword id="KW-0496">Mitochondrion</keyword>
<keyword id="KW-0648">Protein biosynthesis</keyword>
<keyword id="KW-1185">Reference proteome</keyword>
<sequence length="305" mass="33474">MAMYSLFRSVRSEVVKGCLTQHVQSLFTSCPSLAADKALLLQLRKSTGYTFVNCKKALEKCNNDITQAESWLHEQAKKEGWSKATKLEGRKAKEGLIGLMMHDNAAVMVEVNCETDFVARNEKFQQLVKDVALSVMAHQSTSKKTGFIKSVLSSEDMSKLNAPDGPSLADQLALTIGRLGENIAMRRAVSLSVPSDWHIGSYIHGTVAGQVGIEMGRYGSLVVFQGEPKEGTYALGRKLAQHVMGEAPVSLGNMDDLSCGDSETRLLPQTFLPDPKYTVAQYLTLQDARVLDFIRFQCGESSSQE</sequence>
<proteinExistence type="evidence at transcript level"/>
<name>EFTS_DANRE</name>
<evidence type="ECO:0000255" key="1">
    <source>
        <dbReference type="HAMAP-Rule" id="MF_03135"/>
    </source>
</evidence>